<proteinExistence type="inferred from homology"/>
<accession>A7MZE2</accession>
<dbReference type="EC" id="6.1.1.21" evidence="1"/>
<dbReference type="EMBL" id="CP000789">
    <property type="protein sequence ID" value="ABU70061.1"/>
    <property type="molecule type" value="Genomic_DNA"/>
</dbReference>
<dbReference type="RefSeq" id="WP_010648375.1">
    <property type="nucleotide sequence ID" value="NC_022269.1"/>
</dbReference>
<dbReference type="SMR" id="A7MZE2"/>
<dbReference type="KEGG" id="vha:VIBHAR_01068"/>
<dbReference type="PATRIC" id="fig|338187.25.peg.1560"/>
<dbReference type="Proteomes" id="UP000008152">
    <property type="component" value="Chromosome I"/>
</dbReference>
<dbReference type="GO" id="GO:0005737">
    <property type="term" value="C:cytoplasm"/>
    <property type="evidence" value="ECO:0007669"/>
    <property type="project" value="UniProtKB-SubCell"/>
</dbReference>
<dbReference type="GO" id="GO:0005524">
    <property type="term" value="F:ATP binding"/>
    <property type="evidence" value="ECO:0007669"/>
    <property type="project" value="UniProtKB-UniRule"/>
</dbReference>
<dbReference type="GO" id="GO:0004821">
    <property type="term" value="F:histidine-tRNA ligase activity"/>
    <property type="evidence" value="ECO:0007669"/>
    <property type="project" value="UniProtKB-UniRule"/>
</dbReference>
<dbReference type="GO" id="GO:0006427">
    <property type="term" value="P:histidyl-tRNA aminoacylation"/>
    <property type="evidence" value="ECO:0007669"/>
    <property type="project" value="UniProtKB-UniRule"/>
</dbReference>
<dbReference type="CDD" id="cd00773">
    <property type="entry name" value="HisRS-like_core"/>
    <property type="match status" value="1"/>
</dbReference>
<dbReference type="CDD" id="cd00859">
    <property type="entry name" value="HisRS_anticodon"/>
    <property type="match status" value="1"/>
</dbReference>
<dbReference type="FunFam" id="3.30.930.10:FF:000005">
    <property type="entry name" value="Histidine--tRNA ligase"/>
    <property type="match status" value="1"/>
</dbReference>
<dbReference type="Gene3D" id="3.40.50.800">
    <property type="entry name" value="Anticodon-binding domain"/>
    <property type="match status" value="1"/>
</dbReference>
<dbReference type="Gene3D" id="3.30.930.10">
    <property type="entry name" value="Bira Bifunctional Protein, Domain 2"/>
    <property type="match status" value="1"/>
</dbReference>
<dbReference type="HAMAP" id="MF_00127">
    <property type="entry name" value="His_tRNA_synth"/>
    <property type="match status" value="1"/>
</dbReference>
<dbReference type="InterPro" id="IPR006195">
    <property type="entry name" value="aa-tRNA-synth_II"/>
</dbReference>
<dbReference type="InterPro" id="IPR045864">
    <property type="entry name" value="aa-tRNA-synth_II/BPL/LPL"/>
</dbReference>
<dbReference type="InterPro" id="IPR004154">
    <property type="entry name" value="Anticodon-bd"/>
</dbReference>
<dbReference type="InterPro" id="IPR036621">
    <property type="entry name" value="Anticodon-bd_dom_sf"/>
</dbReference>
<dbReference type="InterPro" id="IPR015807">
    <property type="entry name" value="His-tRNA-ligase"/>
</dbReference>
<dbReference type="InterPro" id="IPR041715">
    <property type="entry name" value="HisRS-like_core"/>
</dbReference>
<dbReference type="InterPro" id="IPR004516">
    <property type="entry name" value="HisRS/HisZ"/>
</dbReference>
<dbReference type="InterPro" id="IPR033656">
    <property type="entry name" value="HisRS_anticodon"/>
</dbReference>
<dbReference type="NCBIfam" id="TIGR00442">
    <property type="entry name" value="hisS"/>
    <property type="match status" value="1"/>
</dbReference>
<dbReference type="PANTHER" id="PTHR43707:SF1">
    <property type="entry name" value="HISTIDINE--TRNA LIGASE, MITOCHONDRIAL-RELATED"/>
    <property type="match status" value="1"/>
</dbReference>
<dbReference type="PANTHER" id="PTHR43707">
    <property type="entry name" value="HISTIDYL-TRNA SYNTHETASE"/>
    <property type="match status" value="1"/>
</dbReference>
<dbReference type="Pfam" id="PF03129">
    <property type="entry name" value="HGTP_anticodon"/>
    <property type="match status" value="1"/>
</dbReference>
<dbReference type="Pfam" id="PF13393">
    <property type="entry name" value="tRNA-synt_His"/>
    <property type="match status" value="1"/>
</dbReference>
<dbReference type="PIRSF" id="PIRSF001549">
    <property type="entry name" value="His-tRNA_synth"/>
    <property type="match status" value="1"/>
</dbReference>
<dbReference type="SUPFAM" id="SSF52954">
    <property type="entry name" value="Class II aaRS ABD-related"/>
    <property type="match status" value="1"/>
</dbReference>
<dbReference type="SUPFAM" id="SSF55681">
    <property type="entry name" value="Class II aaRS and biotin synthetases"/>
    <property type="match status" value="1"/>
</dbReference>
<dbReference type="PROSITE" id="PS50862">
    <property type="entry name" value="AA_TRNA_LIGASE_II"/>
    <property type="match status" value="1"/>
</dbReference>
<comment type="catalytic activity">
    <reaction evidence="1">
        <text>tRNA(His) + L-histidine + ATP = L-histidyl-tRNA(His) + AMP + diphosphate + H(+)</text>
        <dbReference type="Rhea" id="RHEA:17313"/>
        <dbReference type="Rhea" id="RHEA-COMP:9665"/>
        <dbReference type="Rhea" id="RHEA-COMP:9689"/>
        <dbReference type="ChEBI" id="CHEBI:15378"/>
        <dbReference type="ChEBI" id="CHEBI:30616"/>
        <dbReference type="ChEBI" id="CHEBI:33019"/>
        <dbReference type="ChEBI" id="CHEBI:57595"/>
        <dbReference type="ChEBI" id="CHEBI:78442"/>
        <dbReference type="ChEBI" id="CHEBI:78527"/>
        <dbReference type="ChEBI" id="CHEBI:456215"/>
        <dbReference type="EC" id="6.1.1.21"/>
    </reaction>
</comment>
<comment type="subunit">
    <text evidence="1">Homodimer.</text>
</comment>
<comment type="subcellular location">
    <subcellularLocation>
        <location evidence="1">Cytoplasm</location>
    </subcellularLocation>
</comment>
<comment type="similarity">
    <text evidence="1">Belongs to the class-II aminoacyl-tRNA synthetase family.</text>
</comment>
<sequence>MAKKIQAIRGMNDCLPTQSPLWQKLENAVKSTVSAYGYNEVRMPIVEETNLFSRAVGEETDVVSKEMYTFDDRNGDSLTLRPEGTAGCVRACIQNSLINRDEQRLWYMGPMFRHERPQKGRYRQFHQCGVEVFGLNGPDVDAELIMMTARLWRELGINEHVRLELNSIGSQEDRADYRTALVAFLEQHIDVLDEDCKRRMHTNPLRVLDTKNPEVQAILGDAPRLSEYLGEESKAHFAGLCELLDAAGIEYTVNERLVRGLDYYNRTVFEWITESLGAQGTVCGGGRYDGLVEQLGGSATPAVGFAMGLERLVLMLETLELTDVRRSVDVYVVTAGEGTMMVGMKLAEQLREAIPGVRVMSHFGGGNFKKQFKRADKVGAVVALVLGENEVAENTVVLKDLVGGEQETYNQAEVAEKIAALI</sequence>
<gene>
    <name evidence="1" type="primary">hisS</name>
    <name type="ordered locus">VIBHAR_01068</name>
</gene>
<protein>
    <recommendedName>
        <fullName evidence="1">Histidine--tRNA ligase</fullName>
        <ecNumber evidence="1">6.1.1.21</ecNumber>
    </recommendedName>
    <alternativeName>
        <fullName evidence="1">Histidyl-tRNA synthetase</fullName>
        <shortName evidence="1">HisRS</shortName>
    </alternativeName>
</protein>
<keyword id="KW-0030">Aminoacyl-tRNA synthetase</keyword>
<keyword id="KW-0067">ATP-binding</keyword>
<keyword id="KW-0963">Cytoplasm</keyword>
<keyword id="KW-0436">Ligase</keyword>
<keyword id="KW-0547">Nucleotide-binding</keyword>
<keyword id="KW-0648">Protein biosynthesis</keyword>
<reference key="1">
    <citation type="submission" date="2007-08" db="EMBL/GenBank/DDBJ databases">
        <authorList>
            <consortium name="The Vibrio harveyi Genome Sequencing Project"/>
            <person name="Bassler B."/>
            <person name="Clifton S.W."/>
            <person name="Fulton L."/>
            <person name="Delehaunty K."/>
            <person name="Fronick C."/>
            <person name="Harrison M."/>
            <person name="Markivic C."/>
            <person name="Fulton R."/>
            <person name="Tin-Wollam A.-M."/>
            <person name="Shah N."/>
            <person name="Pepin K."/>
            <person name="Nash W."/>
            <person name="Thiruvilangam P."/>
            <person name="Bhonagiri V."/>
            <person name="Waters C."/>
            <person name="Tu K.C."/>
            <person name="Irgon J."/>
            <person name="Wilson R.K."/>
        </authorList>
    </citation>
    <scope>NUCLEOTIDE SEQUENCE [LARGE SCALE GENOMIC DNA]</scope>
    <source>
        <strain>ATCC BAA-1116 / BB120</strain>
    </source>
</reference>
<name>SYH_VIBC1</name>
<evidence type="ECO:0000255" key="1">
    <source>
        <dbReference type="HAMAP-Rule" id="MF_00127"/>
    </source>
</evidence>
<feature type="chain" id="PRO_1000016483" description="Histidine--tRNA ligase">
    <location>
        <begin position="1"/>
        <end position="422"/>
    </location>
</feature>
<organism>
    <name type="scientific">Vibrio campbellii (strain ATCC BAA-1116)</name>
    <dbReference type="NCBI Taxonomy" id="2902295"/>
    <lineage>
        <taxon>Bacteria</taxon>
        <taxon>Pseudomonadati</taxon>
        <taxon>Pseudomonadota</taxon>
        <taxon>Gammaproteobacteria</taxon>
        <taxon>Vibrionales</taxon>
        <taxon>Vibrionaceae</taxon>
        <taxon>Vibrio</taxon>
    </lineage>
</organism>